<comment type="subcellular location">
    <subcellularLocation>
        <location evidence="2">Host membrane</location>
        <topology evidence="2">Multi-pass membrane protein</topology>
    </subcellularLocation>
</comment>
<comment type="similarity">
    <text evidence="2">Belongs to the cytomegalovirus US12 family.</text>
</comment>
<dbReference type="EMBL" id="AY446894">
    <property type="protein sequence ID" value="AAR31710.1"/>
    <property type="molecule type" value="Genomic_DNA"/>
</dbReference>
<dbReference type="RefSeq" id="YP_081606.1">
    <property type="nucleotide sequence ID" value="NC_006273.2"/>
</dbReference>
<dbReference type="TCDB" id="1.A.14.3.12">
    <property type="family name" value="the calcium transporter a (cata) family (formerly the testis-enhanced gene transfer (tegt) family)"/>
</dbReference>
<dbReference type="GeneID" id="3077437"/>
<dbReference type="KEGG" id="vg:3077437"/>
<dbReference type="Proteomes" id="UP000000938">
    <property type="component" value="Segment"/>
</dbReference>
<dbReference type="GO" id="GO:0033644">
    <property type="term" value="C:host cell membrane"/>
    <property type="evidence" value="ECO:0007669"/>
    <property type="project" value="UniProtKB-SubCell"/>
</dbReference>
<dbReference type="GO" id="GO:0016020">
    <property type="term" value="C:membrane"/>
    <property type="evidence" value="ECO:0007669"/>
    <property type="project" value="UniProtKB-KW"/>
</dbReference>
<dbReference type="InterPro" id="IPR006214">
    <property type="entry name" value="Bax_inhibitor_1-related"/>
</dbReference>
<dbReference type="PANTHER" id="PTHR23291">
    <property type="entry name" value="BAX INHIBITOR-RELATED"/>
    <property type="match status" value="1"/>
</dbReference>
<dbReference type="PANTHER" id="PTHR23291:SF50">
    <property type="entry name" value="PROTEIN LIFEGUARD 4"/>
    <property type="match status" value="1"/>
</dbReference>
<dbReference type="Pfam" id="PF01027">
    <property type="entry name" value="Bax1-I"/>
    <property type="match status" value="1"/>
</dbReference>
<name>US21_HCMVM</name>
<organism>
    <name type="scientific">Human cytomegalovirus (strain Merlin)</name>
    <name type="common">HHV-5</name>
    <name type="synonym">Human herpesvirus 5</name>
    <dbReference type="NCBI Taxonomy" id="295027"/>
    <lineage>
        <taxon>Viruses</taxon>
        <taxon>Duplodnaviria</taxon>
        <taxon>Heunggongvirae</taxon>
        <taxon>Peploviricota</taxon>
        <taxon>Herviviricetes</taxon>
        <taxon>Herpesvirales</taxon>
        <taxon>Orthoherpesviridae</taxon>
        <taxon>Betaherpesvirinae</taxon>
        <taxon>Cytomegalovirus</taxon>
        <taxon>Cytomegalovirus humanbeta5</taxon>
        <taxon>Human cytomegalovirus</taxon>
    </lineage>
</organism>
<keyword id="KW-1043">Host membrane</keyword>
<keyword id="KW-0472">Membrane</keyword>
<keyword id="KW-1185">Reference proteome</keyword>
<keyword id="KW-0812">Transmembrane</keyword>
<keyword id="KW-1133">Transmembrane helix</keyword>
<proteinExistence type="inferred from homology"/>
<feature type="chain" id="PRO_0000418323" description="Membrane protein US21">
    <location>
        <begin position="1"/>
        <end position="243"/>
    </location>
</feature>
<feature type="transmembrane region" description="Helical" evidence="1">
    <location>
        <begin position="20"/>
        <end position="40"/>
    </location>
</feature>
<feature type="transmembrane region" description="Helical" evidence="1">
    <location>
        <begin position="47"/>
        <end position="67"/>
    </location>
</feature>
<feature type="transmembrane region" description="Helical" evidence="1">
    <location>
        <begin position="80"/>
        <end position="100"/>
    </location>
</feature>
<feature type="transmembrane region" description="Helical" evidence="1">
    <location>
        <begin position="106"/>
        <end position="126"/>
    </location>
</feature>
<feature type="transmembrane region" description="Helical" evidence="1">
    <location>
        <begin position="143"/>
        <end position="163"/>
    </location>
</feature>
<feature type="transmembrane region" description="Helical" evidence="1">
    <location>
        <begin position="164"/>
        <end position="184"/>
    </location>
</feature>
<feature type="transmembrane region" description="Helical" evidence="1">
    <location>
        <begin position="192"/>
        <end position="212"/>
    </location>
</feature>
<reference key="1">
    <citation type="journal article" date="2004" name="J. Gen. Virol.">
        <title>Genetic content of wild-type human cytomegalovirus.</title>
        <authorList>
            <person name="Dolan A."/>
            <person name="Cunningham C."/>
            <person name="Hector R.D."/>
            <person name="Hassan-Walker A.F."/>
            <person name="Lee L."/>
            <person name="Addison C."/>
            <person name="Dargan D.J."/>
            <person name="McGeoch D.J."/>
            <person name="Gatherer D."/>
            <person name="Emery V.C."/>
            <person name="Griffiths P.D."/>
            <person name="Sinzger C."/>
            <person name="McSharry B.P."/>
            <person name="Wilkinson G.W.G."/>
            <person name="Davison A.J."/>
        </authorList>
    </citation>
    <scope>NUCLEOTIDE SEQUENCE [LARGE SCALE GENOMIC DNA]</scope>
</reference>
<gene>
    <name type="primary">US21</name>
</gene>
<organismHost>
    <name type="scientific">Homo sapiens</name>
    <name type="common">Human</name>
    <dbReference type="NCBI Taxonomy" id="9606"/>
</organismHost>
<protein>
    <recommendedName>
        <fullName>Membrane protein US21</fullName>
    </recommendedName>
</protein>
<evidence type="ECO:0000255" key="1"/>
<evidence type="ECO:0000305" key="2"/>
<sequence>MSLRGQVQIARSVFLLRIYILIWVQCLILMSVCAFCWLVLPHRLEQLFSSVRLTLSCLMISIVCLGLLRWAEPNFPKNVWILLTYTLLTSVAVTASGFHFSHRSVIYAMVATVTLFCFLTLATYLFARDVELQRSLLTGASTLILLLFAVFSLFPEAVSEILVMIAGLAVIVTSVVCDTQDILHDIEYESYIPGALCLYMDLMYLFVSVLYFMPSEPGSAHTAQTTVAATVAATAAASPQFVS</sequence>
<accession>F5HHT6</accession>